<reference key="1">
    <citation type="journal article" date="2007" name="PLoS Genet.">
        <title>The complete genome sequence of Yersinia pseudotuberculosis IP31758, the causative agent of Far East scarlet-like fever.</title>
        <authorList>
            <person name="Eppinger M."/>
            <person name="Rosovitz M.J."/>
            <person name="Fricke W.F."/>
            <person name="Rasko D.A."/>
            <person name="Kokorina G."/>
            <person name="Fayolle C."/>
            <person name="Lindler L.E."/>
            <person name="Carniel E."/>
            <person name="Ravel J."/>
        </authorList>
    </citation>
    <scope>NUCLEOTIDE SEQUENCE [LARGE SCALE GENOMIC DNA]</scope>
    <source>
        <strain>IP 31758</strain>
    </source>
</reference>
<accession>A7FMJ7</accession>
<keyword id="KW-0067">ATP-binding</keyword>
<keyword id="KW-0997">Cell inner membrane</keyword>
<keyword id="KW-1003">Cell membrane</keyword>
<keyword id="KW-0472">Membrane</keyword>
<keyword id="KW-0547">Nucleotide-binding</keyword>
<keyword id="KW-0677">Repeat</keyword>
<keyword id="KW-1278">Translocase</keyword>
<keyword id="KW-0813">Transport</keyword>
<organism>
    <name type="scientific">Yersinia pseudotuberculosis serotype O:1b (strain IP 31758)</name>
    <dbReference type="NCBI Taxonomy" id="349747"/>
    <lineage>
        <taxon>Bacteria</taxon>
        <taxon>Pseudomonadati</taxon>
        <taxon>Pseudomonadota</taxon>
        <taxon>Gammaproteobacteria</taxon>
        <taxon>Enterobacterales</taxon>
        <taxon>Yersiniaceae</taxon>
        <taxon>Yersinia</taxon>
    </lineage>
</organism>
<evidence type="ECO:0000250" key="1">
    <source>
        <dbReference type="UniProtKB" id="P77257"/>
    </source>
</evidence>
<evidence type="ECO:0000255" key="2">
    <source>
        <dbReference type="PROSITE-ProRule" id="PRU00434"/>
    </source>
</evidence>
<evidence type="ECO:0000256" key="3">
    <source>
        <dbReference type="SAM" id="MobiDB-lite"/>
    </source>
</evidence>
<evidence type="ECO:0000305" key="4"/>
<protein>
    <recommendedName>
        <fullName evidence="1">Autoinducer 2 import ATP-binding protein LsrA</fullName>
        <shortName evidence="1">AI-2 import ATP-binding protein LsrA</shortName>
        <ecNumber evidence="1">7.6.2.13</ecNumber>
    </recommendedName>
</protein>
<comment type="function">
    <text evidence="1">Part of the ABC transporter complex LsrABCD involved in autoinducer 2 (AI-2) import. Responsible for energy coupling to the transport system.</text>
</comment>
<comment type="catalytic activity">
    <reaction evidence="1">
        <text>ATP + H2O + (2R,4S)-2-methyl-2,3,3,4-tetrahydroxytetrahydrofuran-[AI-2-binding protein]Side 1 = ADP + phosphate + (2R,4S)-2-methyl-2,3,3,4-tetrahydroxytetrahydrofuranSide 2 + [AI-2-binding protein]Side 1.</text>
        <dbReference type="EC" id="7.6.2.13"/>
    </reaction>
</comment>
<comment type="subunit">
    <text evidence="1">The complex is composed of two ATP-binding proteins (LsrA), two transmembrane proteins (LsrC and LsrD) and a solute-binding protein (LsrB).</text>
</comment>
<comment type="subcellular location">
    <subcellularLocation>
        <location evidence="1">Cell inner membrane</location>
        <topology evidence="1">Peripheral membrane protein</topology>
    </subcellularLocation>
</comment>
<comment type="similarity">
    <text evidence="4">Belongs to the ABC transporter superfamily. AI-2 autoinducer porter (TC 3.A.1.2.8) family.</text>
</comment>
<sequence>MPHTVATPPPLLQVRGISKQFSGVVVLKSIDFTLQPGQVHALLGGNGAGKSTLMKIIAGILPPDTGVIEMNGQPCFNLTPAKAHQLGIYLVPQEPMLFANLSVQENILFRLPKHQADKKKMAQLLKNLGCHLDLSVSAGSLEVADQQLVEIMRGLMRDSRILILDEPTASLTPAETHRLFSQIRILLQQGVGVVFISHKLPEIRQLADWVSVMRDGGIALSGATADFSTEDMIQAMTPEAQKGALTDSQKLWLELPGNRRAQSRAQSQQPVIHVHDLSGEGFAHISFHVQAGEILGLAGVVGAGRTELAETLYGLRPASTGNVILEEVNITAMKTANRLAAGLVYLPEDRQASGLYLDAPLSWNVCALAHDRQGLWTQPAQEAAVLERYRRALNIKFSHLEQPVRTLSGGNQQKLLIAKCLEANPLLLIIDEPTRGVDVSARSDIYQLIRSIAEQQVAIIFISSDLEEVVQMADRVLVMHQGEINGALSGAAMNVDTIMHMAFGEHRSVSEPQGGTASSAENKGASC</sequence>
<dbReference type="EC" id="7.6.2.13" evidence="1"/>
<dbReference type="EMBL" id="CP000720">
    <property type="protein sequence ID" value="ABS46062.1"/>
    <property type="molecule type" value="Genomic_DNA"/>
</dbReference>
<dbReference type="RefSeq" id="WP_012105714.1">
    <property type="nucleotide sequence ID" value="NC_009708.1"/>
</dbReference>
<dbReference type="SMR" id="A7FMJ7"/>
<dbReference type="KEGG" id="ypi:YpsIP31758_3521"/>
<dbReference type="HOGENOM" id="CLU_000604_92_1_6"/>
<dbReference type="Proteomes" id="UP000002412">
    <property type="component" value="Chromosome"/>
</dbReference>
<dbReference type="GO" id="GO:0005886">
    <property type="term" value="C:plasma membrane"/>
    <property type="evidence" value="ECO:0007669"/>
    <property type="project" value="UniProtKB-SubCell"/>
</dbReference>
<dbReference type="GO" id="GO:0005524">
    <property type="term" value="F:ATP binding"/>
    <property type="evidence" value="ECO:0007669"/>
    <property type="project" value="UniProtKB-KW"/>
</dbReference>
<dbReference type="GO" id="GO:0016887">
    <property type="term" value="F:ATP hydrolysis activity"/>
    <property type="evidence" value="ECO:0007669"/>
    <property type="project" value="InterPro"/>
</dbReference>
<dbReference type="CDD" id="cd03216">
    <property type="entry name" value="ABC_Carb_Monos_I"/>
    <property type="match status" value="1"/>
</dbReference>
<dbReference type="CDD" id="cd03215">
    <property type="entry name" value="ABC_Carb_Monos_II"/>
    <property type="match status" value="1"/>
</dbReference>
<dbReference type="Gene3D" id="3.40.50.300">
    <property type="entry name" value="P-loop containing nucleotide triphosphate hydrolases"/>
    <property type="match status" value="2"/>
</dbReference>
<dbReference type="InterPro" id="IPR003593">
    <property type="entry name" value="AAA+_ATPase"/>
</dbReference>
<dbReference type="InterPro" id="IPR050107">
    <property type="entry name" value="ABC_carbohydrate_import_ATPase"/>
</dbReference>
<dbReference type="InterPro" id="IPR003439">
    <property type="entry name" value="ABC_transporter-like_ATP-bd"/>
</dbReference>
<dbReference type="InterPro" id="IPR017871">
    <property type="entry name" value="ABC_transporter-like_CS"/>
</dbReference>
<dbReference type="InterPro" id="IPR027417">
    <property type="entry name" value="P-loop_NTPase"/>
</dbReference>
<dbReference type="NCBIfam" id="NF011967">
    <property type="entry name" value="PRK15439.1"/>
    <property type="match status" value="1"/>
</dbReference>
<dbReference type="PANTHER" id="PTHR43790:SF2">
    <property type="entry name" value="AUTOINDUCER 2 IMPORT ATP-BINDING PROTEIN LSRA"/>
    <property type="match status" value="1"/>
</dbReference>
<dbReference type="PANTHER" id="PTHR43790">
    <property type="entry name" value="CARBOHYDRATE TRANSPORT ATP-BINDING PROTEIN MG119-RELATED"/>
    <property type="match status" value="1"/>
</dbReference>
<dbReference type="Pfam" id="PF00005">
    <property type="entry name" value="ABC_tran"/>
    <property type="match status" value="2"/>
</dbReference>
<dbReference type="SMART" id="SM00382">
    <property type="entry name" value="AAA"/>
    <property type="match status" value="2"/>
</dbReference>
<dbReference type="SUPFAM" id="SSF52540">
    <property type="entry name" value="P-loop containing nucleoside triphosphate hydrolases"/>
    <property type="match status" value="2"/>
</dbReference>
<dbReference type="PROSITE" id="PS00211">
    <property type="entry name" value="ABC_TRANSPORTER_1"/>
    <property type="match status" value="1"/>
</dbReference>
<dbReference type="PROSITE" id="PS50893">
    <property type="entry name" value="ABC_TRANSPORTER_2"/>
    <property type="match status" value="2"/>
</dbReference>
<name>LSRA_YERP3</name>
<gene>
    <name type="primary">lsrA</name>
    <name type="ordered locus">YpsIP31758_3521</name>
</gene>
<proteinExistence type="inferred from homology"/>
<feature type="chain" id="PRO_0000351315" description="Autoinducer 2 import ATP-binding protein LsrA">
    <location>
        <begin position="1"/>
        <end position="527"/>
    </location>
</feature>
<feature type="domain" description="ABC transporter 1" evidence="2">
    <location>
        <begin position="12"/>
        <end position="240"/>
    </location>
</feature>
<feature type="domain" description="ABC transporter 2" evidence="2">
    <location>
        <begin position="266"/>
        <end position="506"/>
    </location>
</feature>
<feature type="region of interest" description="Disordered" evidence="3">
    <location>
        <begin position="508"/>
        <end position="527"/>
    </location>
</feature>
<feature type="compositionally biased region" description="Polar residues" evidence="3">
    <location>
        <begin position="510"/>
        <end position="521"/>
    </location>
</feature>
<feature type="binding site" evidence="2">
    <location>
        <begin position="44"/>
        <end position="51"/>
    </location>
    <ligand>
        <name>ATP</name>
        <dbReference type="ChEBI" id="CHEBI:30616"/>
    </ligand>
</feature>